<organism>
    <name type="scientific">Francisella tularensis subsp. tularensis (strain WY96-3418)</name>
    <dbReference type="NCBI Taxonomy" id="418136"/>
    <lineage>
        <taxon>Bacteria</taxon>
        <taxon>Pseudomonadati</taxon>
        <taxon>Pseudomonadota</taxon>
        <taxon>Gammaproteobacteria</taxon>
        <taxon>Thiotrichales</taxon>
        <taxon>Francisellaceae</taxon>
        <taxon>Francisella</taxon>
    </lineage>
</organism>
<evidence type="ECO:0000255" key="1">
    <source>
        <dbReference type="HAMAP-Rule" id="MF_00361"/>
    </source>
</evidence>
<gene>
    <name evidence="1" type="primary">nadK</name>
    <name type="ordered locus">FTW_0434</name>
</gene>
<keyword id="KW-0067">ATP-binding</keyword>
<keyword id="KW-0963">Cytoplasm</keyword>
<keyword id="KW-0418">Kinase</keyword>
<keyword id="KW-0520">NAD</keyword>
<keyword id="KW-0521">NADP</keyword>
<keyword id="KW-0547">Nucleotide-binding</keyword>
<keyword id="KW-0808">Transferase</keyword>
<name>NADK_FRATW</name>
<protein>
    <recommendedName>
        <fullName evidence="1">NAD kinase</fullName>
        <ecNumber evidence="1">2.7.1.23</ecNumber>
    </recommendedName>
    <alternativeName>
        <fullName evidence="1">ATP-dependent NAD kinase</fullName>
    </alternativeName>
</protein>
<proteinExistence type="inferred from homology"/>
<sequence length="296" mass="32475">MAFKYHKVAIVGKHYKKEVSQMVETLYAYLQQQGLEIIIENDTAADTSLVNVAIASLKEIALRCDVAIVVGGDGNFLKASRLLALYSNIPVIGINKGKLGFLTTLAADDNALKNDLYAILKGDSSVTKMSMLKYRVDNNLRAPLEASIALNEIAITASRGLMFGLKVFIDGRYAFDQRGDGLIVSTPTGSTAHAMSAGGPILNPNQNSVVLVPICSHSLNSRPLVISDESVIDIYITDYNDPESVLSIDGRHDTILKAHQKVTIQKARKKVTVLHTKDYNYYDTLREKLGWSKVLF</sequence>
<feature type="chain" id="PRO_1000005411" description="NAD kinase">
    <location>
        <begin position="1"/>
        <end position="296"/>
    </location>
</feature>
<feature type="active site" description="Proton acceptor" evidence="1">
    <location>
        <position position="73"/>
    </location>
</feature>
<feature type="binding site" evidence="1">
    <location>
        <begin position="73"/>
        <end position="74"/>
    </location>
    <ligand>
        <name>NAD(+)</name>
        <dbReference type="ChEBI" id="CHEBI:57540"/>
    </ligand>
</feature>
<feature type="binding site" evidence="1">
    <location>
        <position position="78"/>
    </location>
    <ligand>
        <name>NAD(+)</name>
        <dbReference type="ChEBI" id="CHEBI:57540"/>
    </ligand>
</feature>
<feature type="binding site" evidence="1">
    <location>
        <begin position="151"/>
        <end position="152"/>
    </location>
    <ligand>
        <name>NAD(+)</name>
        <dbReference type="ChEBI" id="CHEBI:57540"/>
    </ligand>
</feature>
<feature type="binding site" evidence="1">
    <location>
        <position position="178"/>
    </location>
    <ligand>
        <name>NAD(+)</name>
        <dbReference type="ChEBI" id="CHEBI:57540"/>
    </ligand>
</feature>
<feature type="binding site" evidence="1">
    <location>
        <position position="180"/>
    </location>
    <ligand>
        <name>NAD(+)</name>
        <dbReference type="ChEBI" id="CHEBI:57540"/>
    </ligand>
</feature>
<feature type="binding site" evidence="1">
    <location>
        <begin position="191"/>
        <end position="196"/>
    </location>
    <ligand>
        <name>NAD(+)</name>
        <dbReference type="ChEBI" id="CHEBI:57540"/>
    </ligand>
</feature>
<dbReference type="EC" id="2.7.1.23" evidence="1"/>
<dbReference type="EMBL" id="CP000608">
    <property type="protein sequence ID" value="ABO46360.1"/>
    <property type="molecule type" value="Genomic_DNA"/>
</dbReference>
<dbReference type="RefSeq" id="WP_003025246.1">
    <property type="nucleotide sequence ID" value="NC_009257.1"/>
</dbReference>
<dbReference type="SMR" id="A4IWQ8"/>
<dbReference type="KEGG" id="ftw:FTW_0434"/>
<dbReference type="HOGENOM" id="CLU_008831_0_1_6"/>
<dbReference type="GO" id="GO:0005737">
    <property type="term" value="C:cytoplasm"/>
    <property type="evidence" value="ECO:0007669"/>
    <property type="project" value="UniProtKB-SubCell"/>
</dbReference>
<dbReference type="GO" id="GO:0005524">
    <property type="term" value="F:ATP binding"/>
    <property type="evidence" value="ECO:0007669"/>
    <property type="project" value="UniProtKB-KW"/>
</dbReference>
<dbReference type="GO" id="GO:0046872">
    <property type="term" value="F:metal ion binding"/>
    <property type="evidence" value="ECO:0007669"/>
    <property type="project" value="UniProtKB-UniRule"/>
</dbReference>
<dbReference type="GO" id="GO:0051287">
    <property type="term" value="F:NAD binding"/>
    <property type="evidence" value="ECO:0007669"/>
    <property type="project" value="UniProtKB-ARBA"/>
</dbReference>
<dbReference type="GO" id="GO:0003951">
    <property type="term" value="F:NAD+ kinase activity"/>
    <property type="evidence" value="ECO:0007669"/>
    <property type="project" value="UniProtKB-UniRule"/>
</dbReference>
<dbReference type="GO" id="GO:0019674">
    <property type="term" value="P:NAD metabolic process"/>
    <property type="evidence" value="ECO:0007669"/>
    <property type="project" value="InterPro"/>
</dbReference>
<dbReference type="GO" id="GO:0006741">
    <property type="term" value="P:NADP biosynthetic process"/>
    <property type="evidence" value="ECO:0007669"/>
    <property type="project" value="UniProtKB-UniRule"/>
</dbReference>
<dbReference type="Gene3D" id="3.40.50.10330">
    <property type="entry name" value="Probable inorganic polyphosphate/atp-NAD kinase, domain 1"/>
    <property type="match status" value="1"/>
</dbReference>
<dbReference type="Gene3D" id="2.60.200.30">
    <property type="entry name" value="Probable inorganic polyphosphate/atp-NAD kinase, domain 2"/>
    <property type="match status" value="1"/>
</dbReference>
<dbReference type="HAMAP" id="MF_00361">
    <property type="entry name" value="NAD_kinase"/>
    <property type="match status" value="1"/>
</dbReference>
<dbReference type="InterPro" id="IPR017438">
    <property type="entry name" value="ATP-NAD_kinase_N"/>
</dbReference>
<dbReference type="InterPro" id="IPR017437">
    <property type="entry name" value="ATP-NAD_kinase_PpnK-typ_C"/>
</dbReference>
<dbReference type="InterPro" id="IPR016064">
    <property type="entry name" value="NAD/diacylglycerol_kinase_sf"/>
</dbReference>
<dbReference type="InterPro" id="IPR002504">
    <property type="entry name" value="NADK"/>
</dbReference>
<dbReference type="PANTHER" id="PTHR20275">
    <property type="entry name" value="NAD KINASE"/>
    <property type="match status" value="1"/>
</dbReference>
<dbReference type="PANTHER" id="PTHR20275:SF0">
    <property type="entry name" value="NAD KINASE"/>
    <property type="match status" value="1"/>
</dbReference>
<dbReference type="Pfam" id="PF01513">
    <property type="entry name" value="NAD_kinase"/>
    <property type="match status" value="1"/>
</dbReference>
<dbReference type="Pfam" id="PF20143">
    <property type="entry name" value="NAD_kinase_C"/>
    <property type="match status" value="1"/>
</dbReference>
<dbReference type="SUPFAM" id="SSF111331">
    <property type="entry name" value="NAD kinase/diacylglycerol kinase-like"/>
    <property type="match status" value="1"/>
</dbReference>
<reference key="1">
    <citation type="journal article" date="2007" name="PLoS ONE">
        <title>Complete genomic characterization of a pathogenic A.II strain of Francisella tularensis subspecies tularensis.</title>
        <authorList>
            <person name="Beckstrom-Sternberg S.M."/>
            <person name="Auerbach R.K."/>
            <person name="Godbole S."/>
            <person name="Pearson J.V."/>
            <person name="Beckstrom-Sternberg J.S."/>
            <person name="Deng Z."/>
            <person name="Munk C."/>
            <person name="Kubota K."/>
            <person name="Zhou Y."/>
            <person name="Bruce D."/>
            <person name="Noronha J."/>
            <person name="Scheuermann R.H."/>
            <person name="Wang A."/>
            <person name="Wei X."/>
            <person name="Wang J."/>
            <person name="Hao J."/>
            <person name="Wagner D.M."/>
            <person name="Brettin T.S."/>
            <person name="Brown N."/>
            <person name="Gilna P."/>
            <person name="Keim P.S."/>
        </authorList>
    </citation>
    <scope>NUCLEOTIDE SEQUENCE [LARGE SCALE GENOMIC DNA]</scope>
    <source>
        <strain>WY96-3418</strain>
    </source>
</reference>
<accession>A4IWQ8</accession>
<comment type="function">
    <text evidence="1">Involved in the regulation of the intracellular balance of NAD and NADP, and is a key enzyme in the biosynthesis of NADP. Catalyzes specifically the phosphorylation on 2'-hydroxyl of the adenosine moiety of NAD to yield NADP.</text>
</comment>
<comment type="catalytic activity">
    <reaction evidence="1">
        <text>NAD(+) + ATP = ADP + NADP(+) + H(+)</text>
        <dbReference type="Rhea" id="RHEA:18629"/>
        <dbReference type="ChEBI" id="CHEBI:15378"/>
        <dbReference type="ChEBI" id="CHEBI:30616"/>
        <dbReference type="ChEBI" id="CHEBI:57540"/>
        <dbReference type="ChEBI" id="CHEBI:58349"/>
        <dbReference type="ChEBI" id="CHEBI:456216"/>
        <dbReference type="EC" id="2.7.1.23"/>
    </reaction>
</comment>
<comment type="cofactor">
    <cofactor evidence="1">
        <name>a divalent metal cation</name>
        <dbReference type="ChEBI" id="CHEBI:60240"/>
    </cofactor>
</comment>
<comment type="subcellular location">
    <subcellularLocation>
        <location evidence="1">Cytoplasm</location>
    </subcellularLocation>
</comment>
<comment type="similarity">
    <text evidence="1">Belongs to the NAD kinase family.</text>
</comment>